<evidence type="ECO:0000305" key="1"/>
<proteinExistence type="inferred from homology"/>
<comment type="similarity">
    <text evidence="1">Belongs to the UPF0128 family.</text>
</comment>
<organism>
    <name type="scientific">Methanocaldococcus jannaschii (strain ATCC 43067 / DSM 2661 / JAL-1 / JCM 10045 / NBRC 100440)</name>
    <name type="common">Methanococcus jannaschii</name>
    <dbReference type="NCBI Taxonomy" id="243232"/>
    <lineage>
        <taxon>Archaea</taxon>
        <taxon>Methanobacteriati</taxon>
        <taxon>Methanobacteriota</taxon>
        <taxon>Methanomada group</taxon>
        <taxon>Methanococci</taxon>
        <taxon>Methanococcales</taxon>
        <taxon>Methanocaldococcaceae</taxon>
        <taxon>Methanocaldococcus</taxon>
    </lineage>
</organism>
<dbReference type="EMBL" id="L77117">
    <property type="protein sequence ID" value="AAB99477.1"/>
    <property type="molecule type" value="Genomic_DNA"/>
</dbReference>
<dbReference type="PIR" id="F64482">
    <property type="entry name" value="F64482"/>
</dbReference>
<dbReference type="RefSeq" id="WP_010870983.1">
    <property type="nucleotide sequence ID" value="NC_000909.1"/>
</dbReference>
<dbReference type="STRING" id="243232.MJ_1463"/>
<dbReference type="PaxDb" id="243232-MJ_1463"/>
<dbReference type="EnsemblBacteria" id="AAB99477">
    <property type="protein sequence ID" value="AAB99477"/>
    <property type="gene ID" value="MJ_1463"/>
</dbReference>
<dbReference type="GeneID" id="1452367"/>
<dbReference type="KEGG" id="mja:MJ_1463"/>
<dbReference type="eggNOG" id="arCOG05084">
    <property type="taxonomic scope" value="Archaea"/>
</dbReference>
<dbReference type="HOGENOM" id="CLU_1243079_0_0_2"/>
<dbReference type="InParanoid" id="Q58858"/>
<dbReference type="OrthoDB" id="84574at2157"/>
<dbReference type="PhylomeDB" id="Q58858"/>
<dbReference type="Proteomes" id="UP000000805">
    <property type="component" value="Chromosome"/>
</dbReference>
<dbReference type="HAMAP" id="MF_00264">
    <property type="entry name" value="UPF0128"/>
    <property type="match status" value="1"/>
</dbReference>
<dbReference type="InterPro" id="IPR005266">
    <property type="entry name" value="UPF0128"/>
</dbReference>
<dbReference type="NCBIfam" id="TIGR00703">
    <property type="entry name" value="TIGR00703 family protein"/>
    <property type="match status" value="1"/>
</dbReference>
<dbReference type="Pfam" id="PF03673">
    <property type="entry name" value="UPF0128"/>
    <property type="match status" value="1"/>
</dbReference>
<dbReference type="PIRSF" id="PIRSF016179">
    <property type="entry name" value="UCP016179"/>
    <property type="match status" value="1"/>
</dbReference>
<gene>
    <name type="ordered locus">MJ1463</name>
</gene>
<feature type="chain" id="PRO_0000185225" description="UPF0128 protein MJ1463">
    <location>
        <begin position="1"/>
        <end position="233"/>
    </location>
</feature>
<keyword id="KW-1185">Reference proteome</keyword>
<reference key="1">
    <citation type="journal article" date="1996" name="Science">
        <title>Complete genome sequence of the methanogenic archaeon, Methanococcus jannaschii.</title>
        <authorList>
            <person name="Bult C.J."/>
            <person name="White O."/>
            <person name="Olsen G.J."/>
            <person name="Zhou L."/>
            <person name="Fleischmann R.D."/>
            <person name="Sutton G.G."/>
            <person name="Blake J.A."/>
            <person name="FitzGerald L.M."/>
            <person name="Clayton R.A."/>
            <person name="Gocayne J.D."/>
            <person name="Kerlavage A.R."/>
            <person name="Dougherty B.A."/>
            <person name="Tomb J.-F."/>
            <person name="Adams M.D."/>
            <person name="Reich C.I."/>
            <person name="Overbeek R."/>
            <person name="Kirkness E.F."/>
            <person name="Weinstock K.G."/>
            <person name="Merrick J.M."/>
            <person name="Glodek A."/>
            <person name="Scott J.L."/>
            <person name="Geoghagen N.S.M."/>
            <person name="Weidman J.F."/>
            <person name="Fuhrmann J.L."/>
            <person name="Nguyen D."/>
            <person name="Utterback T.R."/>
            <person name="Kelley J.M."/>
            <person name="Peterson J.D."/>
            <person name="Sadow P.W."/>
            <person name="Hanna M.C."/>
            <person name="Cotton M.D."/>
            <person name="Roberts K.M."/>
            <person name="Hurst M.A."/>
            <person name="Kaine B.P."/>
            <person name="Borodovsky M."/>
            <person name="Klenk H.-P."/>
            <person name="Fraser C.M."/>
            <person name="Smith H.O."/>
            <person name="Woese C.R."/>
            <person name="Venter J.C."/>
        </authorList>
    </citation>
    <scope>NUCLEOTIDE SEQUENCE [LARGE SCALE GENOMIC DNA]</scope>
    <source>
        <strain>ATCC 43067 / DSM 2661 / JAL-1 / JCM 10045 / NBRC 100440</strain>
    </source>
</reference>
<accession>Q58858</accession>
<sequence>MVVDAKEVEMINTLVFETLGNPEKEREFKLKSLKRWGFDLIFGKVDGKETYFTVELDERKAGDKFSKDGKEYEVIEVLQELPKNTELYAHIEMEMGKAYIVCQLRDEDGKNTEVLRVPAATLLLAFLKKNKLANIIKAIKNVGISLELSMQNGVGGKPLSYEELPNVARRFIRSARKVEKETGFGRLSFAYYGETKDGEPRYRFSWLLPTIALFDLDIAKKVEQTLGILKVSE</sequence>
<protein>
    <recommendedName>
        <fullName>UPF0128 protein MJ1463</fullName>
    </recommendedName>
</protein>
<name>Y1463_METJA</name>